<name>FMT_VIBPA</name>
<organism>
    <name type="scientific">Vibrio parahaemolyticus serotype O3:K6 (strain RIMD 2210633)</name>
    <dbReference type="NCBI Taxonomy" id="223926"/>
    <lineage>
        <taxon>Bacteria</taxon>
        <taxon>Pseudomonadati</taxon>
        <taxon>Pseudomonadota</taxon>
        <taxon>Gammaproteobacteria</taxon>
        <taxon>Vibrionales</taxon>
        <taxon>Vibrionaceae</taxon>
        <taxon>Vibrio</taxon>
    </lineage>
</organism>
<keyword id="KW-0648">Protein biosynthesis</keyword>
<keyword id="KW-0808">Transferase</keyword>
<evidence type="ECO:0000255" key="1">
    <source>
        <dbReference type="HAMAP-Rule" id="MF_00182"/>
    </source>
</evidence>
<accession>Q87KD4</accession>
<dbReference type="EC" id="2.1.2.9" evidence="1"/>
<dbReference type="EMBL" id="BA000031">
    <property type="protein sequence ID" value="BAC61306.1"/>
    <property type="molecule type" value="Genomic_DNA"/>
</dbReference>
<dbReference type="RefSeq" id="NP_799422.1">
    <property type="nucleotide sequence ID" value="NC_004603.1"/>
</dbReference>
<dbReference type="RefSeq" id="WP_005481155.1">
    <property type="nucleotide sequence ID" value="NC_004603.1"/>
</dbReference>
<dbReference type="SMR" id="Q87KD4"/>
<dbReference type="GeneID" id="1190642"/>
<dbReference type="KEGG" id="vpa:VP3043"/>
<dbReference type="PATRIC" id="fig|223926.6.peg.2928"/>
<dbReference type="eggNOG" id="COG0223">
    <property type="taxonomic scope" value="Bacteria"/>
</dbReference>
<dbReference type="HOGENOM" id="CLU_033347_1_2_6"/>
<dbReference type="Proteomes" id="UP000002493">
    <property type="component" value="Chromosome 1"/>
</dbReference>
<dbReference type="GO" id="GO:0005829">
    <property type="term" value="C:cytosol"/>
    <property type="evidence" value="ECO:0007669"/>
    <property type="project" value="TreeGrafter"/>
</dbReference>
<dbReference type="GO" id="GO:0004479">
    <property type="term" value="F:methionyl-tRNA formyltransferase activity"/>
    <property type="evidence" value="ECO:0007669"/>
    <property type="project" value="UniProtKB-UniRule"/>
</dbReference>
<dbReference type="CDD" id="cd08646">
    <property type="entry name" value="FMT_core_Met-tRNA-FMT_N"/>
    <property type="match status" value="1"/>
</dbReference>
<dbReference type="CDD" id="cd08704">
    <property type="entry name" value="Met_tRNA_FMT_C"/>
    <property type="match status" value="1"/>
</dbReference>
<dbReference type="FunFam" id="3.40.50.12230:FF:000001">
    <property type="entry name" value="Methionyl-tRNA formyltransferase"/>
    <property type="match status" value="1"/>
</dbReference>
<dbReference type="FunFam" id="3.40.50.170:FF:000003">
    <property type="entry name" value="Methionyl-tRNA formyltransferase"/>
    <property type="match status" value="1"/>
</dbReference>
<dbReference type="Gene3D" id="3.10.25.10">
    <property type="entry name" value="Formyl transferase, C-terminal domain"/>
    <property type="match status" value="1"/>
</dbReference>
<dbReference type="Gene3D" id="3.40.50.170">
    <property type="entry name" value="Formyl transferase, N-terminal domain"/>
    <property type="match status" value="1"/>
</dbReference>
<dbReference type="HAMAP" id="MF_00182">
    <property type="entry name" value="Formyl_trans"/>
    <property type="match status" value="1"/>
</dbReference>
<dbReference type="InterPro" id="IPR005794">
    <property type="entry name" value="Fmt"/>
</dbReference>
<dbReference type="InterPro" id="IPR005793">
    <property type="entry name" value="Formyl_trans_C"/>
</dbReference>
<dbReference type="InterPro" id="IPR037022">
    <property type="entry name" value="Formyl_trans_C_sf"/>
</dbReference>
<dbReference type="InterPro" id="IPR002376">
    <property type="entry name" value="Formyl_transf_N"/>
</dbReference>
<dbReference type="InterPro" id="IPR036477">
    <property type="entry name" value="Formyl_transf_N_sf"/>
</dbReference>
<dbReference type="InterPro" id="IPR011034">
    <property type="entry name" value="Formyl_transferase-like_C_sf"/>
</dbReference>
<dbReference type="InterPro" id="IPR001555">
    <property type="entry name" value="GART_AS"/>
</dbReference>
<dbReference type="InterPro" id="IPR044135">
    <property type="entry name" value="Met-tRNA-FMT_C"/>
</dbReference>
<dbReference type="InterPro" id="IPR041711">
    <property type="entry name" value="Met-tRNA-FMT_N"/>
</dbReference>
<dbReference type="NCBIfam" id="TIGR00460">
    <property type="entry name" value="fmt"/>
    <property type="match status" value="1"/>
</dbReference>
<dbReference type="PANTHER" id="PTHR11138">
    <property type="entry name" value="METHIONYL-TRNA FORMYLTRANSFERASE"/>
    <property type="match status" value="1"/>
</dbReference>
<dbReference type="PANTHER" id="PTHR11138:SF5">
    <property type="entry name" value="METHIONYL-TRNA FORMYLTRANSFERASE, MITOCHONDRIAL"/>
    <property type="match status" value="1"/>
</dbReference>
<dbReference type="Pfam" id="PF02911">
    <property type="entry name" value="Formyl_trans_C"/>
    <property type="match status" value="1"/>
</dbReference>
<dbReference type="Pfam" id="PF00551">
    <property type="entry name" value="Formyl_trans_N"/>
    <property type="match status" value="1"/>
</dbReference>
<dbReference type="SUPFAM" id="SSF50486">
    <property type="entry name" value="FMT C-terminal domain-like"/>
    <property type="match status" value="1"/>
</dbReference>
<dbReference type="SUPFAM" id="SSF53328">
    <property type="entry name" value="Formyltransferase"/>
    <property type="match status" value="1"/>
</dbReference>
<dbReference type="PROSITE" id="PS00373">
    <property type="entry name" value="GART"/>
    <property type="match status" value="1"/>
</dbReference>
<reference key="1">
    <citation type="journal article" date="2003" name="Lancet">
        <title>Genome sequence of Vibrio parahaemolyticus: a pathogenic mechanism distinct from that of V. cholerae.</title>
        <authorList>
            <person name="Makino K."/>
            <person name="Oshima K."/>
            <person name="Kurokawa K."/>
            <person name="Yokoyama K."/>
            <person name="Uda T."/>
            <person name="Tagomori K."/>
            <person name="Iijima Y."/>
            <person name="Najima M."/>
            <person name="Nakano M."/>
            <person name="Yamashita A."/>
            <person name="Kubota Y."/>
            <person name="Kimura S."/>
            <person name="Yasunaga T."/>
            <person name="Honda T."/>
            <person name="Shinagawa H."/>
            <person name="Hattori M."/>
            <person name="Iida T."/>
        </authorList>
    </citation>
    <scope>NUCLEOTIDE SEQUENCE [LARGE SCALE GENOMIC DNA]</scope>
    <source>
        <strain>RIMD 2210633</strain>
    </source>
</reference>
<proteinExistence type="inferred from homology"/>
<sequence>MSQSLRIVFAGTPDFAARHLAALLSSEHEVIAVYTNPDRPAGRGKKLAAPPVKQLALEHNIPVYQPESFKSDEAKQELADLNADLMVVVAYGMLLPQAVLDTPKLGCINVHGSILPRWRGAAPIQRSIWAGDAETGVTIMQMDIGLDTGDMLKIATLPIEATDTSASMYEKLAELGPEALIDCLADIAAGKAVPVKQDDELANYAKKLNKEEARINWNDDAAHIERCVRAFNPWPMSHFEAAENSIKVWQSRVAEQTSDKPAGTIVQADKTGIYVATGNGVLVLEQLQVPGKKAMSVQDILNSRAAWFEVGTLLV</sequence>
<comment type="function">
    <text evidence="1">Attaches a formyl group to the free amino group of methionyl-tRNA(fMet). The formyl group appears to play a dual role in the initiator identity of N-formylmethionyl-tRNA by promoting its recognition by IF2 and preventing the misappropriation of this tRNA by the elongation apparatus.</text>
</comment>
<comment type="catalytic activity">
    <reaction evidence="1">
        <text>L-methionyl-tRNA(fMet) + (6R)-10-formyltetrahydrofolate = N-formyl-L-methionyl-tRNA(fMet) + (6S)-5,6,7,8-tetrahydrofolate + H(+)</text>
        <dbReference type="Rhea" id="RHEA:24380"/>
        <dbReference type="Rhea" id="RHEA-COMP:9952"/>
        <dbReference type="Rhea" id="RHEA-COMP:9953"/>
        <dbReference type="ChEBI" id="CHEBI:15378"/>
        <dbReference type="ChEBI" id="CHEBI:57453"/>
        <dbReference type="ChEBI" id="CHEBI:78530"/>
        <dbReference type="ChEBI" id="CHEBI:78844"/>
        <dbReference type="ChEBI" id="CHEBI:195366"/>
        <dbReference type="EC" id="2.1.2.9"/>
    </reaction>
</comment>
<comment type="similarity">
    <text evidence="1">Belongs to the Fmt family.</text>
</comment>
<feature type="chain" id="PRO_0000083082" description="Methionyl-tRNA formyltransferase">
    <location>
        <begin position="1"/>
        <end position="315"/>
    </location>
</feature>
<feature type="binding site" evidence="1">
    <location>
        <begin position="113"/>
        <end position="116"/>
    </location>
    <ligand>
        <name>(6S)-5,6,7,8-tetrahydrofolate</name>
        <dbReference type="ChEBI" id="CHEBI:57453"/>
    </ligand>
</feature>
<protein>
    <recommendedName>
        <fullName evidence="1">Methionyl-tRNA formyltransferase</fullName>
        <ecNumber evidence="1">2.1.2.9</ecNumber>
    </recommendedName>
</protein>
<gene>
    <name evidence="1" type="primary">fmt</name>
    <name type="ordered locus">VP3043</name>
</gene>